<reference key="1">
    <citation type="submission" date="2006-12" db="EMBL/GenBank/DDBJ databases">
        <title>Complete sequence of Shewanella amazonensis SB2B.</title>
        <authorList>
            <consortium name="US DOE Joint Genome Institute"/>
            <person name="Copeland A."/>
            <person name="Lucas S."/>
            <person name="Lapidus A."/>
            <person name="Barry K."/>
            <person name="Detter J.C."/>
            <person name="Glavina del Rio T."/>
            <person name="Hammon N."/>
            <person name="Israni S."/>
            <person name="Dalin E."/>
            <person name="Tice H."/>
            <person name="Pitluck S."/>
            <person name="Munk A.C."/>
            <person name="Brettin T."/>
            <person name="Bruce D."/>
            <person name="Han C."/>
            <person name="Tapia R."/>
            <person name="Gilna P."/>
            <person name="Schmutz J."/>
            <person name="Larimer F."/>
            <person name="Land M."/>
            <person name="Hauser L."/>
            <person name="Kyrpides N."/>
            <person name="Mikhailova N."/>
            <person name="Fredrickson J."/>
            <person name="Richardson P."/>
        </authorList>
    </citation>
    <scope>NUCLEOTIDE SEQUENCE [LARGE SCALE GENOMIC DNA]</scope>
    <source>
        <strain>ATCC BAA-1098 / SB2B</strain>
    </source>
</reference>
<proteinExistence type="inferred from homology"/>
<protein>
    <recommendedName>
        <fullName evidence="1">FMN-dependent NADH:quinone oxidoreductase</fullName>
        <ecNumber evidence="1">1.6.5.-</ecNumber>
    </recommendedName>
    <alternativeName>
        <fullName evidence="1">Azo-dye reductase</fullName>
    </alternativeName>
    <alternativeName>
        <fullName evidence="1">FMN-dependent NADH-azo compound oxidoreductase</fullName>
    </alternativeName>
    <alternativeName>
        <fullName evidence="1">FMN-dependent NADH-azoreductase</fullName>
        <ecNumber evidence="1">1.7.1.17</ecNumber>
    </alternativeName>
</protein>
<name>AZOR_SHEAM</name>
<keyword id="KW-0285">Flavoprotein</keyword>
<keyword id="KW-0288">FMN</keyword>
<keyword id="KW-0520">NAD</keyword>
<keyword id="KW-0560">Oxidoreductase</keyword>
<keyword id="KW-1185">Reference proteome</keyword>
<dbReference type="EC" id="1.6.5.-" evidence="1"/>
<dbReference type="EC" id="1.7.1.17" evidence="1"/>
<dbReference type="EMBL" id="CP000507">
    <property type="protein sequence ID" value="ABM01601.1"/>
    <property type="molecule type" value="Genomic_DNA"/>
</dbReference>
<dbReference type="RefSeq" id="WP_011761505.1">
    <property type="nucleotide sequence ID" value="NC_008700.1"/>
</dbReference>
<dbReference type="SMR" id="A1SB44"/>
<dbReference type="STRING" id="326297.Sama_3398"/>
<dbReference type="KEGG" id="saz:Sama_3398"/>
<dbReference type="eggNOG" id="COG1182">
    <property type="taxonomic scope" value="Bacteria"/>
</dbReference>
<dbReference type="HOGENOM" id="CLU_088964_0_0_6"/>
<dbReference type="OrthoDB" id="9787136at2"/>
<dbReference type="Proteomes" id="UP000009175">
    <property type="component" value="Chromosome"/>
</dbReference>
<dbReference type="GO" id="GO:0009055">
    <property type="term" value="F:electron transfer activity"/>
    <property type="evidence" value="ECO:0007669"/>
    <property type="project" value="UniProtKB-UniRule"/>
</dbReference>
<dbReference type="GO" id="GO:0010181">
    <property type="term" value="F:FMN binding"/>
    <property type="evidence" value="ECO:0007669"/>
    <property type="project" value="UniProtKB-UniRule"/>
</dbReference>
<dbReference type="GO" id="GO:0016652">
    <property type="term" value="F:oxidoreductase activity, acting on NAD(P)H as acceptor"/>
    <property type="evidence" value="ECO:0007669"/>
    <property type="project" value="UniProtKB-UniRule"/>
</dbReference>
<dbReference type="GO" id="GO:0016655">
    <property type="term" value="F:oxidoreductase activity, acting on NAD(P)H, quinone or similar compound as acceptor"/>
    <property type="evidence" value="ECO:0007669"/>
    <property type="project" value="InterPro"/>
</dbReference>
<dbReference type="Gene3D" id="3.40.50.360">
    <property type="match status" value="1"/>
</dbReference>
<dbReference type="HAMAP" id="MF_01216">
    <property type="entry name" value="Azoreductase_type1"/>
    <property type="match status" value="1"/>
</dbReference>
<dbReference type="InterPro" id="IPR003680">
    <property type="entry name" value="Flavodoxin_fold"/>
</dbReference>
<dbReference type="InterPro" id="IPR029039">
    <property type="entry name" value="Flavoprotein-like_sf"/>
</dbReference>
<dbReference type="InterPro" id="IPR050104">
    <property type="entry name" value="FMN-dep_NADH:Q_OxRdtase_AzoR1"/>
</dbReference>
<dbReference type="InterPro" id="IPR023048">
    <property type="entry name" value="NADH:quinone_OxRdtase_FMN_depd"/>
</dbReference>
<dbReference type="PANTHER" id="PTHR43741">
    <property type="entry name" value="FMN-DEPENDENT NADH-AZOREDUCTASE 1"/>
    <property type="match status" value="1"/>
</dbReference>
<dbReference type="PANTHER" id="PTHR43741:SF2">
    <property type="entry name" value="FMN-DEPENDENT NADH:QUINONE OXIDOREDUCTASE"/>
    <property type="match status" value="1"/>
</dbReference>
<dbReference type="Pfam" id="PF02525">
    <property type="entry name" value="Flavodoxin_2"/>
    <property type="match status" value="1"/>
</dbReference>
<dbReference type="SUPFAM" id="SSF52218">
    <property type="entry name" value="Flavoproteins"/>
    <property type="match status" value="1"/>
</dbReference>
<evidence type="ECO:0000255" key="1">
    <source>
        <dbReference type="HAMAP-Rule" id="MF_01216"/>
    </source>
</evidence>
<accession>A1SB44</accession>
<feature type="chain" id="PRO_1000066519" description="FMN-dependent NADH:quinone oxidoreductase">
    <location>
        <begin position="1"/>
        <end position="196"/>
    </location>
</feature>
<feature type="binding site" evidence="1">
    <location>
        <position position="10"/>
    </location>
    <ligand>
        <name>FMN</name>
        <dbReference type="ChEBI" id="CHEBI:58210"/>
    </ligand>
</feature>
<feature type="binding site" evidence="1">
    <location>
        <begin position="16"/>
        <end position="18"/>
    </location>
    <ligand>
        <name>FMN</name>
        <dbReference type="ChEBI" id="CHEBI:58210"/>
    </ligand>
</feature>
<feature type="binding site" evidence="1">
    <location>
        <begin position="93"/>
        <end position="96"/>
    </location>
    <ligand>
        <name>FMN</name>
        <dbReference type="ChEBI" id="CHEBI:58210"/>
    </ligand>
</feature>
<feature type="binding site" evidence="1">
    <location>
        <begin position="137"/>
        <end position="140"/>
    </location>
    <ligand>
        <name>FMN</name>
        <dbReference type="ChEBI" id="CHEBI:58210"/>
    </ligand>
</feature>
<sequence length="196" mass="20769">MSKVLVLKSSILGDFSQSGRLIDEWVAARRASGDTVTVRDLAAEPLPVLDGEIASGLRGGESLSPRQQEALALSDALIAELKVHDQLVVAAPMYNFSIPTQLKNWIDLVARAGVTFTYTAEGPQGLIQGKQAMLITTRGGVHKGSGSDHVVPYLKTVLGFIGITDVDTVYAEALSMGPEAAERGIKDARDQLALVG</sequence>
<organism>
    <name type="scientific">Shewanella amazonensis (strain ATCC BAA-1098 / SB2B)</name>
    <dbReference type="NCBI Taxonomy" id="326297"/>
    <lineage>
        <taxon>Bacteria</taxon>
        <taxon>Pseudomonadati</taxon>
        <taxon>Pseudomonadota</taxon>
        <taxon>Gammaproteobacteria</taxon>
        <taxon>Alteromonadales</taxon>
        <taxon>Shewanellaceae</taxon>
        <taxon>Shewanella</taxon>
    </lineage>
</organism>
<comment type="function">
    <text evidence="1">Quinone reductase that provides resistance to thiol-specific stress caused by electrophilic quinones.</text>
</comment>
<comment type="function">
    <text evidence="1">Also exhibits azoreductase activity. Catalyzes the reductive cleavage of the azo bond in aromatic azo compounds to the corresponding amines.</text>
</comment>
<comment type="catalytic activity">
    <reaction evidence="1">
        <text>2 a quinone + NADH + H(+) = 2 a 1,4-benzosemiquinone + NAD(+)</text>
        <dbReference type="Rhea" id="RHEA:65952"/>
        <dbReference type="ChEBI" id="CHEBI:15378"/>
        <dbReference type="ChEBI" id="CHEBI:57540"/>
        <dbReference type="ChEBI" id="CHEBI:57945"/>
        <dbReference type="ChEBI" id="CHEBI:132124"/>
        <dbReference type="ChEBI" id="CHEBI:134225"/>
    </reaction>
</comment>
<comment type="catalytic activity">
    <reaction evidence="1">
        <text>N,N-dimethyl-1,4-phenylenediamine + anthranilate + 2 NAD(+) = 2-(4-dimethylaminophenyl)diazenylbenzoate + 2 NADH + 2 H(+)</text>
        <dbReference type="Rhea" id="RHEA:55872"/>
        <dbReference type="ChEBI" id="CHEBI:15378"/>
        <dbReference type="ChEBI" id="CHEBI:15783"/>
        <dbReference type="ChEBI" id="CHEBI:16567"/>
        <dbReference type="ChEBI" id="CHEBI:57540"/>
        <dbReference type="ChEBI" id="CHEBI:57945"/>
        <dbReference type="ChEBI" id="CHEBI:71579"/>
        <dbReference type="EC" id="1.7.1.17"/>
    </reaction>
</comment>
<comment type="cofactor">
    <cofactor evidence="1">
        <name>FMN</name>
        <dbReference type="ChEBI" id="CHEBI:58210"/>
    </cofactor>
    <text evidence="1">Binds 1 FMN per subunit.</text>
</comment>
<comment type="subunit">
    <text evidence="1">Homodimer.</text>
</comment>
<comment type="similarity">
    <text evidence="1">Belongs to the azoreductase type 1 family.</text>
</comment>
<gene>
    <name evidence="1" type="primary">azoR</name>
    <name type="ordered locus">Sama_3398</name>
</gene>